<comment type="function">
    <text evidence="1">May play a role in signal transduction pathways that involve calcium as a second messenger.</text>
</comment>
<comment type="catalytic activity">
    <reaction evidence="8">
        <text>L-seryl-[protein] + ATP = O-phospho-L-seryl-[protein] + ADP + H(+)</text>
        <dbReference type="Rhea" id="RHEA:17989"/>
        <dbReference type="Rhea" id="RHEA-COMP:9863"/>
        <dbReference type="Rhea" id="RHEA-COMP:11604"/>
        <dbReference type="ChEBI" id="CHEBI:15378"/>
        <dbReference type="ChEBI" id="CHEBI:29999"/>
        <dbReference type="ChEBI" id="CHEBI:30616"/>
        <dbReference type="ChEBI" id="CHEBI:83421"/>
        <dbReference type="ChEBI" id="CHEBI:456216"/>
        <dbReference type="EC" id="2.7.11.1"/>
    </reaction>
</comment>
<comment type="catalytic activity">
    <reaction evidence="8">
        <text>L-threonyl-[protein] + ATP = O-phospho-L-threonyl-[protein] + ADP + H(+)</text>
        <dbReference type="Rhea" id="RHEA:46608"/>
        <dbReference type="Rhea" id="RHEA-COMP:11060"/>
        <dbReference type="Rhea" id="RHEA-COMP:11605"/>
        <dbReference type="ChEBI" id="CHEBI:15378"/>
        <dbReference type="ChEBI" id="CHEBI:30013"/>
        <dbReference type="ChEBI" id="CHEBI:30616"/>
        <dbReference type="ChEBI" id="CHEBI:61977"/>
        <dbReference type="ChEBI" id="CHEBI:456216"/>
        <dbReference type="EC" id="2.7.11.1"/>
    </reaction>
</comment>
<comment type="activity regulation">
    <text evidence="1">Activated by calcium. Autophosphorylation may play an important role in the regulation of the kinase activity.</text>
</comment>
<comment type="subcellular location">
    <subcellularLocation>
        <location evidence="8">Membrane</location>
        <topology evidence="8">Lipid-anchor</topology>
    </subcellularLocation>
</comment>
<comment type="tissue specificity">
    <text evidence="6">Expressed in roots and leaf blades.</text>
</comment>
<comment type="domain">
    <text evidence="1">There are 3 contiguous domains conserved in the CDPK subfamily: a kinase domain, an autoinhibitory (junction) domain and a calmodulin-like domain. The autoinhibitory domain (330-360) inactivates kinase activity under calcium-free conditions.</text>
</comment>
<comment type="similarity">
    <text evidence="8">Belongs to the protein kinase superfamily. Ser/Thr protein kinase family. CDPK subfamily.</text>
</comment>
<comment type="sequence caution" evidence="8">
    <conflict type="erroneous gene model prediction">
        <sequence resource="EMBL-CDS" id="BAD61167"/>
    </conflict>
</comment>
<organism>
    <name type="scientific">Oryza sativa subsp. japonica</name>
    <name type="common">Rice</name>
    <dbReference type="NCBI Taxonomy" id="39947"/>
    <lineage>
        <taxon>Eukaryota</taxon>
        <taxon>Viridiplantae</taxon>
        <taxon>Streptophyta</taxon>
        <taxon>Embryophyta</taxon>
        <taxon>Tracheophyta</taxon>
        <taxon>Spermatophyta</taxon>
        <taxon>Magnoliopsida</taxon>
        <taxon>Liliopsida</taxon>
        <taxon>Poales</taxon>
        <taxon>Poaceae</taxon>
        <taxon>BOP clade</taxon>
        <taxon>Oryzoideae</taxon>
        <taxon>Oryzeae</taxon>
        <taxon>Oryzinae</taxon>
        <taxon>Oryza</taxon>
        <taxon>Oryza sativa</taxon>
    </lineage>
</organism>
<name>CDPK1_ORYSJ</name>
<dbReference type="EC" id="2.7.11.1" evidence="8"/>
<dbReference type="EMBL" id="AP002819">
    <property type="protein sequence ID" value="BAD61167.1"/>
    <property type="status" value="ALT_SEQ"/>
    <property type="molecule type" value="Genomic_DNA"/>
</dbReference>
<dbReference type="EMBL" id="AP014957">
    <property type="protein sequence ID" value="BAS73225.1"/>
    <property type="molecule type" value="Genomic_DNA"/>
</dbReference>
<dbReference type="EMBL" id="CM000138">
    <property type="protein sequence ID" value="EAZ12734.1"/>
    <property type="molecule type" value="Genomic_DNA"/>
</dbReference>
<dbReference type="EMBL" id="AK243656">
    <property type="protein sequence ID" value="BAH01699.1"/>
    <property type="molecule type" value="mRNA"/>
</dbReference>
<dbReference type="RefSeq" id="XP_015650814.1">
    <property type="nucleotide sequence ID" value="XM_015795328.1"/>
</dbReference>
<dbReference type="SMR" id="A2ZVI7"/>
<dbReference type="FunCoup" id="A2ZVI7">
    <property type="interactions" value="2969"/>
</dbReference>
<dbReference type="STRING" id="39947.A2ZVI7"/>
<dbReference type="iPTMnet" id="A2ZVI7"/>
<dbReference type="PaxDb" id="39947-A2ZVI7"/>
<dbReference type="EnsemblPlants" id="Os01t0622600-01">
    <property type="protein sequence ID" value="Os01t0622600-01"/>
    <property type="gene ID" value="Os01g0622600"/>
</dbReference>
<dbReference type="Gramene" id="Os01t0622600-01">
    <property type="protein sequence ID" value="Os01t0622600-01"/>
    <property type="gene ID" value="Os01g0622600"/>
</dbReference>
<dbReference type="eggNOG" id="KOG0032">
    <property type="taxonomic scope" value="Eukaryota"/>
</dbReference>
<dbReference type="HOGENOM" id="CLU_000288_37_3_1"/>
<dbReference type="InParanoid" id="A2ZVI7"/>
<dbReference type="OMA" id="KQWFIMS"/>
<dbReference type="OrthoDB" id="40902at2759"/>
<dbReference type="Proteomes" id="UP000000763">
    <property type="component" value="Chromosome 1"/>
</dbReference>
<dbReference type="Proteomes" id="UP000007752">
    <property type="component" value="Chromosome 1"/>
</dbReference>
<dbReference type="Proteomes" id="UP000059680">
    <property type="component" value="Chromosome 1"/>
</dbReference>
<dbReference type="GO" id="GO:0005737">
    <property type="term" value="C:cytoplasm"/>
    <property type="evidence" value="ECO:0000318"/>
    <property type="project" value="GO_Central"/>
</dbReference>
<dbReference type="GO" id="GO:0016020">
    <property type="term" value="C:membrane"/>
    <property type="evidence" value="ECO:0007669"/>
    <property type="project" value="UniProtKB-SubCell"/>
</dbReference>
<dbReference type="GO" id="GO:0005634">
    <property type="term" value="C:nucleus"/>
    <property type="evidence" value="ECO:0000318"/>
    <property type="project" value="GO_Central"/>
</dbReference>
<dbReference type="GO" id="GO:0005524">
    <property type="term" value="F:ATP binding"/>
    <property type="evidence" value="ECO:0007669"/>
    <property type="project" value="UniProtKB-KW"/>
</dbReference>
<dbReference type="GO" id="GO:0005509">
    <property type="term" value="F:calcium ion binding"/>
    <property type="evidence" value="ECO:0007669"/>
    <property type="project" value="InterPro"/>
</dbReference>
<dbReference type="GO" id="GO:0009931">
    <property type="term" value="F:calcium-dependent protein serine/threonine kinase activity"/>
    <property type="evidence" value="ECO:0000318"/>
    <property type="project" value="GO_Central"/>
</dbReference>
<dbReference type="GO" id="GO:0004683">
    <property type="term" value="F:calcium/calmodulin-dependent protein kinase activity"/>
    <property type="evidence" value="ECO:0000318"/>
    <property type="project" value="GO_Central"/>
</dbReference>
<dbReference type="GO" id="GO:0005516">
    <property type="term" value="F:calmodulin binding"/>
    <property type="evidence" value="ECO:0000318"/>
    <property type="project" value="GO_Central"/>
</dbReference>
<dbReference type="GO" id="GO:0106310">
    <property type="term" value="F:protein serine kinase activity"/>
    <property type="evidence" value="ECO:0007669"/>
    <property type="project" value="RHEA"/>
</dbReference>
<dbReference type="GO" id="GO:0035556">
    <property type="term" value="P:intracellular signal transduction"/>
    <property type="evidence" value="ECO:0000318"/>
    <property type="project" value="GO_Central"/>
</dbReference>
<dbReference type="CDD" id="cd00051">
    <property type="entry name" value="EFh"/>
    <property type="match status" value="1"/>
</dbReference>
<dbReference type="CDD" id="cd05117">
    <property type="entry name" value="STKc_CAMK"/>
    <property type="match status" value="1"/>
</dbReference>
<dbReference type="FunFam" id="1.10.238.10:FF:000015">
    <property type="entry name" value="Calcium-dependent protein kinase 1"/>
    <property type="match status" value="1"/>
</dbReference>
<dbReference type="FunFam" id="3.30.200.20:FF:000004">
    <property type="entry name" value="Calcium-dependent protein kinase 1"/>
    <property type="match status" value="1"/>
</dbReference>
<dbReference type="FunFam" id="1.10.510.10:FF:000056">
    <property type="entry name" value="calcium-dependent protein kinase 1"/>
    <property type="match status" value="1"/>
</dbReference>
<dbReference type="Gene3D" id="1.10.238.10">
    <property type="entry name" value="EF-hand"/>
    <property type="match status" value="1"/>
</dbReference>
<dbReference type="Gene3D" id="3.30.200.20">
    <property type="entry name" value="Phosphorylase Kinase, domain 1"/>
    <property type="match status" value="1"/>
</dbReference>
<dbReference type="Gene3D" id="1.10.510.10">
    <property type="entry name" value="Transferase(Phosphotransferase) domain 1"/>
    <property type="match status" value="1"/>
</dbReference>
<dbReference type="InterPro" id="IPR050205">
    <property type="entry name" value="CDPK_Ser/Thr_kinases"/>
</dbReference>
<dbReference type="InterPro" id="IPR011992">
    <property type="entry name" value="EF-hand-dom_pair"/>
</dbReference>
<dbReference type="InterPro" id="IPR018247">
    <property type="entry name" value="EF_Hand_1_Ca_BS"/>
</dbReference>
<dbReference type="InterPro" id="IPR002048">
    <property type="entry name" value="EF_hand_dom"/>
</dbReference>
<dbReference type="InterPro" id="IPR011009">
    <property type="entry name" value="Kinase-like_dom_sf"/>
</dbReference>
<dbReference type="InterPro" id="IPR000719">
    <property type="entry name" value="Prot_kinase_dom"/>
</dbReference>
<dbReference type="InterPro" id="IPR017441">
    <property type="entry name" value="Protein_kinase_ATP_BS"/>
</dbReference>
<dbReference type="InterPro" id="IPR008271">
    <property type="entry name" value="Ser/Thr_kinase_AS"/>
</dbReference>
<dbReference type="PANTHER" id="PTHR24349">
    <property type="entry name" value="SERINE/THREONINE-PROTEIN KINASE"/>
    <property type="match status" value="1"/>
</dbReference>
<dbReference type="Pfam" id="PF13499">
    <property type="entry name" value="EF-hand_7"/>
    <property type="match status" value="2"/>
</dbReference>
<dbReference type="Pfam" id="PF00069">
    <property type="entry name" value="Pkinase"/>
    <property type="match status" value="1"/>
</dbReference>
<dbReference type="SMART" id="SM00054">
    <property type="entry name" value="EFh"/>
    <property type="match status" value="4"/>
</dbReference>
<dbReference type="SMART" id="SM00220">
    <property type="entry name" value="S_TKc"/>
    <property type="match status" value="1"/>
</dbReference>
<dbReference type="SUPFAM" id="SSF47473">
    <property type="entry name" value="EF-hand"/>
    <property type="match status" value="1"/>
</dbReference>
<dbReference type="SUPFAM" id="SSF56112">
    <property type="entry name" value="Protein kinase-like (PK-like)"/>
    <property type="match status" value="1"/>
</dbReference>
<dbReference type="PROSITE" id="PS00018">
    <property type="entry name" value="EF_HAND_1"/>
    <property type="match status" value="4"/>
</dbReference>
<dbReference type="PROSITE" id="PS50222">
    <property type="entry name" value="EF_HAND_2"/>
    <property type="match status" value="4"/>
</dbReference>
<dbReference type="PROSITE" id="PS00107">
    <property type="entry name" value="PROTEIN_KINASE_ATP"/>
    <property type="match status" value="1"/>
</dbReference>
<dbReference type="PROSITE" id="PS50011">
    <property type="entry name" value="PROTEIN_KINASE_DOM"/>
    <property type="match status" value="1"/>
</dbReference>
<dbReference type="PROSITE" id="PS00108">
    <property type="entry name" value="PROTEIN_KINASE_ST"/>
    <property type="match status" value="1"/>
</dbReference>
<gene>
    <name evidence="7" type="primary">CPK1</name>
    <name evidence="10" type="ordered locus">Os01g0622600</name>
    <name evidence="8" type="ordered locus">LOC_Os01g43410</name>
    <name evidence="11" type="ORF">OsJ_02652</name>
    <name evidence="9" type="ORF">P0501G01.10</name>
</gene>
<sequence length="518" mass="58740">MGNRTSRHHRAAPEQPPPQPKPKPQPQQQQQQWPRPQQPTPPPAAAPDAAMGRVLGRPMEDVRATYTFGRELGRGQFGVTYLVTHKATGKRFACKSIATRKLAHRDDIEDVRREVQIMHHLTGHRNIVELRGAYEDRHSVNLIMELCEGGELFDRIIARGHYSERAAAALCREIVAVVHSCHSMGVFHRDLKPENFLFLSKSEDSPLKATDFGLSVFFKPGEHFKDLVGSAYYVAPEVLKRNYGAEADIWSAGVILYILLSGVPPFWAESEDGIFDAVLRGHIDFSSEPWPSISNGAKDLVKKMLRQDPKERLTSAEILNHPWIREDGEAPDKPLDITVISRMKQFRAMNKLKKVALKVVAENLSDEEITGLKEMFRSLDTDNSGTITLEELRSGLPKLGTKISESEIRQLMEAADVDGNGTIDYAEFISATMHMNRLEKEDHILKAFEYFDKDHSGYITVDELEEALKKYDMGDDKTIKEIIAEVDTDHDGRINYQEFVAMMRNNNPEIAPNRRRMF</sequence>
<feature type="initiator methionine" description="Removed" evidence="2">
    <location>
        <position position="1"/>
    </location>
</feature>
<feature type="chain" id="PRO_0000437546" description="Calcium-dependent protein kinase 1">
    <location>
        <begin position="2"/>
        <end position="518"/>
    </location>
</feature>
<feature type="domain" description="Protein kinase" evidence="3">
    <location>
        <begin position="66"/>
        <end position="324"/>
    </location>
</feature>
<feature type="domain" description="EF-hand 1" evidence="4">
    <location>
        <begin position="367"/>
        <end position="402"/>
    </location>
</feature>
<feature type="domain" description="EF-hand 2" evidence="4">
    <location>
        <begin position="403"/>
        <end position="438"/>
    </location>
</feature>
<feature type="domain" description="EF-hand 3" evidence="4">
    <location>
        <begin position="439"/>
        <end position="474"/>
    </location>
</feature>
<feature type="domain" description="EF-hand 4" evidence="4">
    <location>
        <begin position="475"/>
        <end position="509"/>
    </location>
</feature>
<feature type="region of interest" description="Disordered" evidence="5">
    <location>
        <begin position="1"/>
        <end position="49"/>
    </location>
</feature>
<feature type="region of interest" description="Autoinhibitory domain" evidence="1">
    <location>
        <begin position="330"/>
        <end position="360"/>
    </location>
</feature>
<feature type="compositionally biased region" description="Basic residues" evidence="5">
    <location>
        <begin position="1"/>
        <end position="10"/>
    </location>
</feature>
<feature type="compositionally biased region" description="Pro residues" evidence="5">
    <location>
        <begin position="14"/>
        <end position="25"/>
    </location>
</feature>
<feature type="compositionally biased region" description="Low complexity" evidence="5">
    <location>
        <begin position="26"/>
        <end position="35"/>
    </location>
</feature>
<feature type="compositionally biased region" description="Pro residues" evidence="5">
    <location>
        <begin position="36"/>
        <end position="45"/>
    </location>
</feature>
<feature type="active site" description="Proton acceptor" evidence="3">
    <location>
        <position position="190"/>
    </location>
</feature>
<feature type="binding site" evidence="3">
    <location>
        <begin position="72"/>
        <end position="80"/>
    </location>
    <ligand>
        <name>ATP</name>
        <dbReference type="ChEBI" id="CHEBI:30616"/>
    </ligand>
</feature>
<feature type="binding site" evidence="3">
    <location>
        <position position="95"/>
    </location>
    <ligand>
        <name>ATP</name>
        <dbReference type="ChEBI" id="CHEBI:30616"/>
    </ligand>
</feature>
<feature type="binding site" evidence="4">
    <location>
        <position position="380"/>
    </location>
    <ligand>
        <name>Ca(2+)</name>
        <dbReference type="ChEBI" id="CHEBI:29108"/>
        <label>1</label>
    </ligand>
</feature>
<feature type="binding site" evidence="4">
    <location>
        <position position="382"/>
    </location>
    <ligand>
        <name>Ca(2+)</name>
        <dbReference type="ChEBI" id="CHEBI:29108"/>
        <label>1</label>
    </ligand>
</feature>
<feature type="binding site" evidence="4">
    <location>
        <position position="384"/>
    </location>
    <ligand>
        <name>Ca(2+)</name>
        <dbReference type="ChEBI" id="CHEBI:29108"/>
        <label>1</label>
    </ligand>
</feature>
<feature type="binding site" evidence="4">
    <location>
        <position position="386"/>
    </location>
    <ligand>
        <name>Ca(2+)</name>
        <dbReference type="ChEBI" id="CHEBI:29108"/>
        <label>1</label>
    </ligand>
</feature>
<feature type="binding site" evidence="4">
    <location>
        <position position="391"/>
    </location>
    <ligand>
        <name>Ca(2+)</name>
        <dbReference type="ChEBI" id="CHEBI:29108"/>
        <label>1</label>
    </ligand>
</feature>
<feature type="binding site" evidence="4">
    <location>
        <position position="416"/>
    </location>
    <ligand>
        <name>Ca(2+)</name>
        <dbReference type="ChEBI" id="CHEBI:29108"/>
        <label>2</label>
    </ligand>
</feature>
<feature type="binding site" evidence="4">
    <location>
        <position position="418"/>
    </location>
    <ligand>
        <name>Ca(2+)</name>
        <dbReference type="ChEBI" id="CHEBI:29108"/>
        <label>2</label>
    </ligand>
</feature>
<feature type="binding site" evidence="4">
    <location>
        <position position="420"/>
    </location>
    <ligand>
        <name>Ca(2+)</name>
        <dbReference type="ChEBI" id="CHEBI:29108"/>
        <label>2</label>
    </ligand>
</feature>
<feature type="binding site" evidence="4">
    <location>
        <position position="422"/>
    </location>
    <ligand>
        <name>Ca(2+)</name>
        <dbReference type="ChEBI" id="CHEBI:29108"/>
        <label>2</label>
    </ligand>
</feature>
<feature type="binding site" evidence="4">
    <location>
        <position position="427"/>
    </location>
    <ligand>
        <name>Ca(2+)</name>
        <dbReference type="ChEBI" id="CHEBI:29108"/>
        <label>2</label>
    </ligand>
</feature>
<feature type="binding site" evidence="4">
    <location>
        <position position="452"/>
    </location>
    <ligand>
        <name>Ca(2+)</name>
        <dbReference type="ChEBI" id="CHEBI:29108"/>
        <label>3</label>
    </ligand>
</feature>
<feature type="binding site" evidence="4">
    <location>
        <position position="454"/>
    </location>
    <ligand>
        <name>Ca(2+)</name>
        <dbReference type="ChEBI" id="CHEBI:29108"/>
        <label>3</label>
    </ligand>
</feature>
<feature type="binding site" evidence="4">
    <location>
        <position position="456"/>
    </location>
    <ligand>
        <name>Ca(2+)</name>
        <dbReference type="ChEBI" id="CHEBI:29108"/>
        <label>3</label>
    </ligand>
</feature>
<feature type="binding site" evidence="4">
    <location>
        <position position="458"/>
    </location>
    <ligand>
        <name>Ca(2+)</name>
        <dbReference type="ChEBI" id="CHEBI:29108"/>
        <label>3</label>
    </ligand>
</feature>
<feature type="binding site" evidence="4">
    <location>
        <position position="463"/>
    </location>
    <ligand>
        <name>Ca(2+)</name>
        <dbReference type="ChEBI" id="CHEBI:29108"/>
        <label>3</label>
    </ligand>
</feature>
<feature type="binding site" evidence="4">
    <location>
        <position position="487"/>
    </location>
    <ligand>
        <name>Ca(2+)</name>
        <dbReference type="ChEBI" id="CHEBI:29108"/>
        <label>4</label>
    </ligand>
</feature>
<feature type="binding site" evidence="4">
    <location>
        <position position="489"/>
    </location>
    <ligand>
        <name>Ca(2+)</name>
        <dbReference type="ChEBI" id="CHEBI:29108"/>
        <label>4</label>
    </ligand>
</feature>
<feature type="binding site" evidence="4">
    <location>
        <position position="491"/>
    </location>
    <ligand>
        <name>Ca(2+)</name>
        <dbReference type="ChEBI" id="CHEBI:29108"/>
        <label>4</label>
    </ligand>
</feature>
<feature type="binding site" evidence="4">
    <location>
        <position position="493"/>
    </location>
    <ligand>
        <name>Ca(2+)</name>
        <dbReference type="ChEBI" id="CHEBI:29108"/>
        <label>4</label>
    </ligand>
</feature>
<feature type="binding site" evidence="4">
    <location>
        <position position="498"/>
    </location>
    <ligand>
        <name>Ca(2+)</name>
        <dbReference type="ChEBI" id="CHEBI:29108"/>
        <label>4</label>
    </ligand>
</feature>
<feature type="lipid moiety-binding region" description="N-myristoyl glycine" evidence="2">
    <location>
        <position position="2"/>
    </location>
</feature>
<reference key="1">
    <citation type="journal article" date="2002" name="Nature">
        <title>The genome sequence and structure of rice chromosome 1.</title>
        <authorList>
            <person name="Sasaki T."/>
            <person name="Matsumoto T."/>
            <person name="Yamamoto K."/>
            <person name="Sakata K."/>
            <person name="Baba T."/>
            <person name="Katayose Y."/>
            <person name="Wu J."/>
            <person name="Niimura Y."/>
            <person name="Cheng Z."/>
            <person name="Nagamura Y."/>
            <person name="Antonio B.A."/>
            <person name="Kanamori H."/>
            <person name="Hosokawa S."/>
            <person name="Masukawa M."/>
            <person name="Arikawa K."/>
            <person name="Chiden Y."/>
            <person name="Hayashi M."/>
            <person name="Okamoto M."/>
            <person name="Ando T."/>
            <person name="Aoki H."/>
            <person name="Arita K."/>
            <person name="Hamada M."/>
            <person name="Harada C."/>
            <person name="Hijishita S."/>
            <person name="Honda M."/>
            <person name="Ichikawa Y."/>
            <person name="Idonuma A."/>
            <person name="Iijima M."/>
            <person name="Ikeda M."/>
            <person name="Ikeno M."/>
            <person name="Ito S."/>
            <person name="Ito T."/>
            <person name="Ito Y."/>
            <person name="Ito Y."/>
            <person name="Iwabuchi A."/>
            <person name="Kamiya K."/>
            <person name="Karasawa W."/>
            <person name="Katagiri S."/>
            <person name="Kikuta A."/>
            <person name="Kobayashi N."/>
            <person name="Kono I."/>
            <person name="Machita K."/>
            <person name="Maehara T."/>
            <person name="Mizuno H."/>
            <person name="Mizubayashi T."/>
            <person name="Mukai Y."/>
            <person name="Nagasaki H."/>
            <person name="Nakashima M."/>
            <person name="Nakama Y."/>
            <person name="Nakamichi Y."/>
            <person name="Nakamura M."/>
            <person name="Namiki N."/>
            <person name="Negishi M."/>
            <person name="Ohta I."/>
            <person name="Ono N."/>
            <person name="Saji S."/>
            <person name="Sakai K."/>
            <person name="Shibata M."/>
            <person name="Shimokawa T."/>
            <person name="Shomura A."/>
            <person name="Song J."/>
            <person name="Takazaki Y."/>
            <person name="Terasawa K."/>
            <person name="Tsuji K."/>
            <person name="Waki K."/>
            <person name="Yamagata H."/>
            <person name="Yamane H."/>
            <person name="Yoshiki S."/>
            <person name="Yoshihara R."/>
            <person name="Yukawa K."/>
            <person name="Zhong H."/>
            <person name="Iwama H."/>
            <person name="Endo T."/>
            <person name="Ito H."/>
            <person name="Hahn J.H."/>
            <person name="Kim H.-I."/>
            <person name="Eun M.-Y."/>
            <person name="Yano M."/>
            <person name="Jiang J."/>
            <person name="Gojobori T."/>
        </authorList>
    </citation>
    <scope>NUCLEOTIDE SEQUENCE [LARGE SCALE GENOMIC DNA]</scope>
    <source>
        <strain>cv. Nipponbare</strain>
    </source>
</reference>
<reference key="2">
    <citation type="journal article" date="2005" name="Nature">
        <title>The map-based sequence of the rice genome.</title>
        <authorList>
            <consortium name="International rice genome sequencing project (IRGSP)"/>
        </authorList>
    </citation>
    <scope>NUCLEOTIDE SEQUENCE [LARGE SCALE GENOMIC DNA]</scope>
    <source>
        <strain>cv. Nipponbare</strain>
    </source>
</reference>
<reference key="3">
    <citation type="journal article" date="2013" name="Rice">
        <title>Improvement of the Oryza sativa Nipponbare reference genome using next generation sequence and optical map data.</title>
        <authorList>
            <person name="Kawahara Y."/>
            <person name="de la Bastide M."/>
            <person name="Hamilton J.P."/>
            <person name="Kanamori H."/>
            <person name="McCombie W.R."/>
            <person name="Ouyang S."/>
            <person name="Schwartz D.C."/>
            <person name="Tanaka T."/>
            <person name="Wu J."/>
            <person name="Zhou S."/>
            <person name="Childs K.L."/>
            <person name="Davidson R.M."/>
            <person name="Lin H."/>
            <person name="Quesada-Ocampo L."/>
            <person name="Vaillancourt B."/>
            <person name="Sakai H."/>
            <person name="Lee S.S."/>
            <person name="Kim J."/>
            <person name="Numa H."/>
            <person name="Itoh T."/>
            <person name="Buell C.R."/>
            <person name="Matsumoto T."/>
        </authorList>
    </citation>
    <scope>GENOME REANNOTATION</scope>
    <source>
        <strain>cv. Nipponbare</strain>
    </source>
</reference>
<reference key="4">
    <citation type="journal article" date="2005" name="PLoS Biol.">
        <title>The genomes of Oryza sativa: a history of duplications.</title>
        <authorList>
            <person name="Yu J."/>
            <person name="Wang J."/>
            <person name="Lin W."/>
            <person name="Li S."/>
            <person name="Li H."/>
            <person name="Zhou J."/>
            <person name="Ni P."/>
            <person name="Dong W."/>
            <person name="Hu S."/>
            <person name="Zeng C."/>
            <person name="Zhang J."/>
            <person name="Zhang Y."/>
            <person name="Li R."/>
            <person name="Xu Z."/>
            <person name="Li S."/>
            <person name="Li X."/>
            <person name="Zheng H."/>
            <person name="Cong L."/>
            <person name="Lin L."/>
            <person name="Yin J."/>
            <person name="Geng J."/>
            <person name="Li G."/>
            <person name="Shi J."/>
            <person name="Liu J."/>
            <person name="Lv H."/>
            <person name="Li J."/>
            <person name="Wang J."/>
            <person name="Deng Y."/>
            <person name="Ran L."/>
            <person name="Shi X."/>
            <person name="Wang X."/>
            <person name="Wu Q."/>
            <person name="Li C."/>
            <person name="Ren X."/>
            <person name="Wang J."/>
            <person name="Wang X."/>
            <person name="Li D."/>
            <person name="Liu D."/>
            <person name="Zhang X."/>
            <person name="Ji Z."/>
            <person name="Zhao W."/>
            <person name="Sun Y."/>
            <person name="Zhang Z."/>
            <person name="Bao J."/>
            <person name="Han Y."/>
            <person name="Dong L."/>
            <person name="Ji J."/>
            <person name="Chen P."/>
            <person name="Wu S."/>
            <person name="Liu J."/>
            <person name="Xiao Y."/>
            <person name="Bu D."/>
            <person name="Tan J."/>
            <person name="Yang L."/>
            <person name="Ye C."/>
            <person name="Zhang J."/>
            <person name="Xu J."/>
            <person name="Zhou Y."/>
            <person name="Yu Y."/>
            <person name="Zhang B."/>
            <person name="Zhuang S."/>
            <person name="Wei H."/>
            <person name="Liu B."/>
            <person name="Lei M."/>
            <person name="Yu H."/>
            <person name="Li Y."/>
            <person name="Xu H."/>
            <person name="Wei S."/>
            <person name="He X."/>
            <person name="Fang L."/>
            <person name="Zhang Z."/>
            <person name="Zhang Y."/>
            <person name="Huang X."/>
            <person name="Su Z."/>
            <person name="Tong W."/>
            <person name="Li J."/>
            <person name="Tong Z."/>
            <person name="Li S."/>
            <person name="Ye J."/>
            <person name="Wang L."/>
            <person name="Fang L."/>
            <person name="Lei T."/>
            <person name="Chen C.-S."/>
            <person name="Chen H.-C."/>
            <person name="Xu Z."/>
            <person name="Li H."/>
            <person name="Huang H."/>
            <person name="Zhang F."/>
            <person name="Xu H."/>
            <person name="Li N."/>
            <person name="Zhao C."/>
            <person name="Li S."/>
            <person name="Dong L."/>
            <person name="Huang Y."/>
            <person name="Li L."/>
            <person name="Xi Y."/>
            <person name="Qi Q."/>
            <person name="Li W."/>
            <person name="Zhang B."/>
            <person name="Hu W."/>
            <person name="Zhang Y."/>
            <person name="Tian X."/>
            <person name="Jiao Y."/>
            <person name="Liang X."/>
            <person name="Jin J."/>
            <person name="Gao L."/>
            <person name="Zheng W."/>
            <person name="Hao B."/>
            <person name="Liu S.-M."/>
            <person name="Wang W."/>
            <person name="Yuan L."/>
            <person name="Cao M."/>
            <person name="McDermott J."/>
            <person name="Samudrala R."/>
            <person name="Wang J."/>
            <person name="Wong G.K.-S."/>
            <person name="Yang H."/>
        </authorList>
    </citation>
    <scope>NUCLEOTIDE SEQUENCE [LARGE SCALE GENOMIC DNA]</scope>
    <source>
        <strain>cv. Nipponbare</strain>
    </source>
</reference>
<reference key="5">
    <citation type="submission" date="2006-10" db="EMBL/GenBank/DDBJ databases">
        <title>Oryza sativa full length cDNA.</title>
        <authorList>
            <consortium name="The rice full-length cDNA consortium"/>
        </authorList>
    </citation>
    <scope>NUCLEOTIDE SEQUENCE [LARGE SCALE MRNA]</scope>
    <source>
        <strain>cv. Nipponbare</strain>
    </source>
</reference>
<reference key="6">
    <citation type="journal article" date="2005" name="Plant Cell Physiol.">
        <title>Genome-wide identification of the rice calcium-dependent protein kinase and its closely related kinase gene families: comprehensive analysis of the CDPKs gene family in rice.</title>
        <authorList>
            <person name="Asano T."/>
            <person name="Tanaka N."/>
            <person name="Yang G."/>
            <person name="Hayashi N."/>
            <person name="Komatsu S."/>
        </authorList>
    </citation>
    <scope>GENE FAMILY</scope>
    <scope>NOMENCLATURE</scope>
    <scope>TISSUE SPECIFICITY</scope>
</reference>
<proteinExistence type="evidence at transcript level"/>
<keyword id="KW-0067">ATP-binding</keyword>
<keyword id="KW-0106">Calcium</keyword>
<keyword id="KW-0418">Kinase</keyword>
<keyword id="KW-0449">Lipoprotein</keyword>
<keyword id="KW-0472">Membrane</keyword>
<keyword id="KW-0479">Metal-binding</keyword>
<keyword id="KW-0519">Myristate</keyword>
<keyword id="KW-0547">Nucleotide-binding</keyword>
<keyword id="KW-1185">Reference proteome</keyword>
<keyword id="KW-0677">Repeat</keyword>
<keyword id="KW-0723">Serine/threonine-protein kinase</keyword>
<keyword id="KW-0808">Transferase</keyword>
<evidence type="ECO:0000250" key="1">
    <source>
        <dbReference type="UniProtKB" id="Q06850"/>
    </source>
</evidence>
<evidence type="ECO:0000255" key="2"/>
<evidence type="ECO:0000255" key="3">
    <source>
        <dbReference type="PROSITE-ProRule" id="PRU00159"/>
    </source>
</evidence>
<evidence type="ECO:0000255" key="4">
    <source>
        <dbReference type="PROSITE-ProRule" id="PRU00448"/>
    </source>
</evidence>
<evidence type="ECO:0000256" key="5">
    <source>
        <dbReference type="SAM" id="MobiDB-lite"/>
    </source>
</evidence>
<evidence type="ECO:0000269" key="6">
    <source>
    </source>
</evidence>
<evidence type="ECO:0000303" key="7">
    <source>
    </source>
</evidence>
<evidence type="ECO:0000305" key="8"/>
<evidence type="ECO:0000312" key="9">
    <source>
        <dbReference type="EMBL" id="BAD61167.1"/>
    </source>
</evidence>
<evidence type="ECO:0000312" key="10">
    <source>
        <dbReference type="EMBL" id="BAS73225.1"/>
    </source>
</evidence>
<evidence type="ECO:0000312" key="11">
    <source>
        <dbReference type="EMBL" id="EAZ12734.1"/>
    </source>
</evidence>
<protein>
    <recommendedName>
        <fullName evidence="8">Calcium-dependent protein kinase 1</fullName>
        <shortName evidence="8">OsCDPK1</shortName>
        <shortName evidence="7">OsCPK1</shortName>
        <ecNumber evidence="8">2.7.11.1</ecNumber>
    </recommendedName>
</protein>
<accession>A2ZVI7</accession>
<accession>Q5ZE73</accession>